<feature type="chain" id="PRO_0000377129" description="tRNA dimethylallyltransferase">
    <location>
        <begin position="1"/>
        <end position="301"/>
    </location>
</feature>
<feature type="region of interest" description="Interaction with substrate tRNA" evidence="1">
    <location>
        <begin position="27"/>
        <end position="30"/>
    </location>
</feature>
<feature type="region of interest" description="Interaction with substrate tRNA" evidence="1">
    <location>
        <begin position="151"/>
        <end position="155"/>
    </location>
</feature>
<feature type="binding site" evidence="1">
    <location>
        <begin position="2"/>
        <end position="9"/>
    </location>
    <ligand>
        <name>ATP</name>
        <dbReference type="ChEBI" id="CHEBI:30616"/>
    </ligand>
</feature>
<feature type="binding site" evidence="1">
    <location>
        <begin position="4"/>
        <end position="9"/>
    </location>
    <ligand>
        <name>substrate</name>
    </ligand>
</feature>
<feature type="site" description="Interaction with substrate tRNA" evidence="1">
    <location>
        <position position="93"/>
    </location>
</feature>
<feature type="site" description="Interaction with substrate tRNA" evidence="1">
    <location>
        <position position="115"/>
    </location>
</feature>
<comment type="function">
    <text evidence="1">Catalyzes the transfer of a dimethylallyl group onto the adenine at position 37 in tRNAs that read codons beginning with uridine, leading to the formation of N6-(dimethylallyl)adenosine (i(6)A).</text>
</comment>
<comment type="catalytic activity">
    <reaction evidence="1">
        <text>adenosine(37) in tRNA + dimethylallyl diphosphate = N(6)-dimethylallyladenosine(37) in tRNA + diphosphate</text>
        <dbReference type="Rhea" id="RHEA:26482"/>
        <dbReference type="Rhea" id="RHEA-COMP:10162"/>
        <dbReference type="Rhea" id="RHEA-COMP:10375"/>
        <dbReference type="ChEBI" id="CHEBI:33019"/>
        <dbReference type="ChEBI" id="CHEBI:57623"/>
        <dbReference type="ChEBI" id="CHEBI:74411"/>
        <dbReference type="ChEBI" id="CHEBI:74415"/>
        <dbReference type="EC" id="2.5.1.75"/>
    </reaction>
</comment>
<comment type="cofactor">
    <cofactor evidence="1">
        <name>Mg(2+)</name>
        <dbReference type="ChEBI" id="CHEBI:18420"/>
    </cofactor>
</comment>
<comment type="subunit">
    <text evidence="1">Monomer.</text>
</comment>
<comment type="similarity">
    <text evidence="1">Belongs to the IPP transferase family.</text>
</comment>
<organism>
    <name type="scientific">Coxiella burnetii (strain CbuG_Q212)</name>
    <name type="common">Coxiella burnetii (strain Q212)</name>
    <dbReference type="NCBI Taxonomy" id="434923"/>
    <lineage>
        <taxon>Bacteria</taxon>
        <taxon>Pseudomonadati</taxon>
        <taxon>Pseudomonadota</taxon>
        <taxon>Gammaproteobacteria</taxon>
        <taxon>Legionellales</taxon>
        <taxon>Coxiellaceae</taxon>
        <taxon>Coxiella</taxon>
    </lineage>
</organism>
<sequence length="301" mass="34795">MGPTASGKTDLAIALARKLPFEIISVDSAMVYRGLDIGTAKPNEEELQLTSHRLINICDPSFPYSAGQFYKDALSEIKTIEIRNRTPLLVGGTMLYFHILEQGFSDLPTADETVRKKIQEEAAQHGWAKIHERLNAIDPKSAARINPNDAQRIQRAFEVYETTGQPLSSYQSLKRFKALPYQFINLILAPENRSWLHQRIEKRFDQMLKNNFLEEVRQLYNRGDLNSDLPAIRTVGYRQVWKYLSGEYDYETMRHKAIAATRQLAKRQLTWLRRWPDAKWFNSEDKDLISQVVDYLKGIGM</sequence>
<evidence type="ECO:0000255" key="1">
    <source>
        <dbReference type="HAMAP-Rule" id="MF_00185"/>
    </source>
</evidence>
<name>MIAA_COXB2</name>
<proteinExistence type="inferred from homology"/>
<keyword id="KW-0067">ATP-binding</keyword>
<keyword id="KW-0460">Magnesium</keyword>
<keyword id="KW-0547">Nucleotide-binding</keyword>
<keyword id="KW-0808">Transferase</keyword>
<keyword id="KW-0819">tRNA processing</keyword>
<protein>
    <recommendedName>
        <fullName evidence="1">tRNA dimethylallyltransferase</fullName>
        <ecNumber evidence="1">2.5.1.75</ecNumber>
    </recommendedName>
    <alternativeName>
        <fullName evidence="1">Dimethylallyl diphosphate:tRNA dimethylallyltransferase</fullName>
        <shortName evidence="1">DMAPP:tRNA dimethylallyltransferase</shortName>
        <shortName evidence="1">DMATase</shortName>
    </alternativeName>
    <alternativeName>
        <fullName evidence="1">Isopentenyl-diphosphate:tRNA isopentenyltransferase</fullName>
        <shortName evidence="1">IPP transferase</shortName>
        <shortName evidence="1">IPPT</shortName>
        <shortName evidence="1">IPTase</shortName>
    </alternativeName>
</protein>
<gene>
    <name evidence="1" type="primary">miaA</name>
    <name type="ordered locus">CbuG_0921</name>
</gene>
<accession>B6J017</accession>
<dbReference type="EC" id="2.5.1.75" evidence="1"/>
<dbReference type="EMBL" id="CP001019">
    <property type="protein sequence ID" value="ACJ18295.1"/>
    <property type="molecule type" value="Genomic_DNA"/>
</dbReference>
<dbReference type="SMR" id="B6J017"/>
<dbReference type="KEGG" id="cbg:CbuG_0921"/>
<dbReference type="HOGENOM" id="CLU_032616_0_0_6"/>
<dbReference type="GO" id="GO:0005524">
    <property type="term" value="F:ATP binding"/>
    <property type="evidence" value="ECO:0007669"/>
    <property type="project" value="UniProtKB-UniRule"/>
</dbReference>
<dbReference type="GO" id="GO:0052381">
    <property type="term" value="F:tRNA dimethylallyltransferase activity"/>
    <property type="evidence" value="ECO:0007669"/>
    <property type="project" value="UniProtKB-UniRule"/>
</dbReference>
<dbReference type="GO" id="GO:0006400">
    <property type="term" value="P:tRNA modification"/>
    <property type="evidence" value="ECO:0007669"/>
    <property type="project" value="TreeGrafter"/>
</dbReference>
<dbReference type="FunFam" id="1.10.20.140:FF:000001">
    <property type="entry name" value="tRNA dimethylallyltransferase"/>
    <property type="match status" value="1"/>
</dbReference>
<dbReference type="Gene3D" id="1.10.20.140">
    <property type="match status" value="1"/>
</dbReference>
<dbReference type="Gene3D" id="3.40.50.300">
    <property type="entry name" value="P-loop containing nucleotide triphosphate hydrolases"/>
    <property type="match status" value="1"/>
</dbReference>
<dbReference type="HAMAP" id="MF_00185">
    <property type="entry name" value="IPP_trans"/>
    <property type="match status" value="1"/>
</dbReference>
<dbReference type="InterPro" id="IPR039657">
    <property type="entry name" value="Dimethylallyltransferase"/>
</dbReference>
<dbReference type="InterPro" id="IPR018022">
    <property type="entry name" value="IPT"/>
</dbReference>
<dbReference type="InterPro" id="IPR027417">
    <property type="entry name" value="P-loop_NTPase"/>
</dbReference>
<dbReference type="NCBIfam" id="TIGR00174">
    <property type="entry name" value="miaA"/>
    <property type="match status" value="1"/>
</dbReference>
<dbReference type="PANTHER" id="PTHR11088">
    <property type="entry name" value="TRNA DIMETHYLALLYLTRANSFERASE"/>
    <property type="match status" value="1"/>
</dbReference>
<dbReference type="PANTHER" id="PTHR11088:SF60">
    <property type="entry name" value="TRNA DIMETHYLALLYLTRANSFERASE"/>
    <property type="match status" value="1"/>
</dbReference>
<dbReference type="Pfam" id="PF01715">
    <property type="entry name" value="IPPT"/>
    <property type="match status" value="1"/>
</dbReference>
<dbReference type="SUPFAM" id="SSF52540">
    <property type="entry name" value="P-loop containing nucleoside triphosphate hydrolases"/>
    <property type="match status" value="2"/>
</dbReference>
<reference key="1">
    <citation type="journal article" date="2009" name="Infect. Immun.">
        <title>Comparative genomics reveal extensive transposon-mediated genomic plasticity and diversity among potential effector proteins within the genus Coxiella.</title>
        <authorList>
            <person name="Beare P.A."/>
            <person name="Unsworth N."/>
            <person name="Andoh M."/>
            <person name="Voth D.E."/>
            <person name="Omsland A."/>
            <person name="Gilk S.D."/>
            <person name="Williams K.P."/>
            <person name="Sobral B.W."/>
            <person name="Kupko J.J. III"/>
            <person name="Porcella S.F."/>
            <person name="Samuel J.E."/>
            <person name="Heinzen R.A."/>
        </authorList>
    </citation>
    <scope>NUCLEOTIDE SEQUENCE [LARGE SCALE GENOMIC DNA]</scope>
    <source>
        <strain>CbuG_Q212</strain>
    </source>
</reference>